<evidence type="ECO:0000250" key="1"/>
<evidence type="ECO:0000269" key="2">
    <source>
    </source>
</evidence>
<evidence type="ECO:0000269" key="3">
    <source>
    </source>
</evidence>
<evidence type="ECO:0000269" key="4">
    <source>
    </source>
</evidence>
<evidence type="ECO:0000269" key="5">
    <source>
    </source>
</evidence>
<evidence type="ECO:0000269" key="6">
    <source>
    </source>
</evidence>
<evidence type="ECO:0000269" key="7">
    <source>
    </source>
</evidence>
<evidence type="ECO:0000305" key="8"/>
<reference key="1">
    <citation type="journal article" date="1989" name="Eur. J. Biochem.">
        <title>Cloning and chromosomal localization of Drosophila cDNA encoding the catalytic subunit of protein phosphatase 1 alpha. High conservation between mammalian and insect sequences.</title>
        <authorList>
            <person name="Dombradi V."/>
            <person name="Axton J.M."/>
            <person name="Glover D.M."/>
            <person name="Cohen P.T.W."/>
        </authorList>
    </citation>
    <scope>NUCLEOTIDE SEQUENCE [MRNA]</scope>
    <source>
        <tissue>Head</tissue>
    </source>
</reference>
<reference key="2">
    <citation type="journal article" date="1992" name="FEBS Lett.">
        <title>Protein phosphorylation is involved in the regulation of chromatin condensation during interphase.</title>
        <authorList>
            <person name="Dombradi V."/>
            <person name="Cohen P.T.W."/>
        </authorList>
    </citation>
    <scope>NUCLEOTIDE SEQUENCE [GENOMIC DNA]</scope>
    <scope>FUNCTION</scope>
    <source>
        <strain>Canton-S</strain>
    </source>
</reference>
<reference key="3">
    <citation type="journal article" date="2000" name="Science">
        <title>The genome sequence of Drosophila melanogaster.</title>
        <authorList>
            <person name="Adams M.D."/>
            <person name="Celniker S.E."/>
            <person name="Holt R.A."/>
            <person name="Evans C.A."/>
            <person name="Gocayne J.D."/>
            <person name="Amanatides P.G."/>
            <person name="Scherer S.E."/>
            <person name="Li P.W."/>
            <person name="Hoskins R.A."/>
            <person name="Galle R.F."/>
            <person name="George R.A."/>
            <person name="Lewis S.E."/>
            <person name="Richards S."/>
            <person name="Ashburner M."/>
            <person name="Henderson S.N."/>
            <person name="Sutton G.G."/>
            <person name="Wortman J.R."/>
            <person name="Yandell M.D."/>
            <person name="Zhang Q."/>
            <person name="Chen L.X."/>
            <person name="Brandon R.C."/>
            <person name="Rogers Y.-H.C."/>
            <person name="Blazej R.G."/>
            <person name="Champe M."/>
            <person name="Pfeiffer B.D."/>
            <person name="Wan K.H."/>
            <person name="Doyle C."/>
            <person name="Baxter E.G."/>
            <person name="Helt G."/>
            <person name="Nelson C.R."/>
            <person name="Miklos G.L.G."/>
            <person name="Abril J.F."/>
            <person name="Agbayani A."/>
            <person name="An H.-J."/>
            <person name="Andrews-Pfannkoch C."/>
            <person name="Baldwin D."/>
            <person name="Ballew R.M."/>
            <person name="Basu A."/>
            <person name="Baxendale J."/>
            <person name="Bayraktaroglu L."/>
            <person name="Beasley E.M."/>
            <person name="Beeson K.Y."/>
            <person name="Benos P.V."/>
            <person name="Berman B.P."/>
            <person name="Bhandari D."/>
            <person name="Bolshakov S."/>
            <person name="Borkova D."/>
            <person name="Botchan M.R."/>
            <person name="Bouck J."/>
            <person name="Brokstein P."/>
            <person name="Brottier P."/>
            <person name="Burtis K.C."/>
            <person name="Busam D.A."/>
            <person name="Butler H."/>
            <person name="Cadieu E."/>
            <person name="Center A."/>
            <person name="Chandra I."/>
            <person name="Cherry J.M."/>
            <person name="Cawley S."/>
            <person name="Dahlke C."/>
            <person name="Davenport L.B."/>
            <person name="Davies P."/>
            <person name="de Pablos B."/>
            <person name="Delcher A."/>
            <person name="Deng Z."/>
            <person name="Mays A.D."/>
            <person name="Dew I."/>
            <person name="Dietz S.M."/>
            <person name="Dodson K."/>
            <person name="Doup L.E."/>
            <person name="Downes M."/>
            <person name="Dugan-Rocha S."/>
            <person name="Dunkov B.C."/>
            <person name="Dunn P."/>
            <person name="Durbin K.J."/>
            <person name="Evangelista C.C."/>
            <person name="Ferraz C."/>
            <person name="Ferriera S."/>
            <person name="Fleischmann W."/>
            <person name="Fosler C."/>
            <person name="Gabrielian A.E."/>
            <person name="Garg N.S."/>
            <person name="Gelbart W.M."/>
            <person name="Glasser K."/>
            <person name="Glodek A."/>
            <person name="Gong F."/>
            <person name="Gorrell J.H."/>
            <person name="Gu Z."/>
            <person name="Guan P."/>
            <person name="Harris M."/>
            <person name="Harris N.L."/>
            <person name="Harvey D.A."/>
            <person name="Heiman T.J."/>
            <person name="Hernandez J.R."/>
            <person name="Houck J."/>
            <person name="Hostin D."/>
            <person name="Houston K.A."/>
            <person name="Howland T.J."/>
            <person name="Wei M.-H."/>
            <person name="Ibegwam C."/>
            <person name="Jalali M."/>
            <person name="Kalush F."/>
            <person name="Karpen G.H."/>
            <person name="Ke Z."/>
            <person name="Kennison J.A."/>
            <person name="Ketchum K.A."/>
            <person name="Kimmel B.E."/>
            <person name="Kodira C.D."/>
            <person name="Kraft C.L."/>
            <person name="Kravitz S."/>
            <person name="Kulp D."/>
            <person name="Lai Z."/>
            <person name="Lasko P."/>
            <person name="Lei Y."/>
            <person name="Levitsky A.A."/>
            <person name="Li J.H."/>
            <person name="Li Z."/>
            <person name="Liang Y."/>
            <person name="Lin X."/>
            <person name="Liu X."/>
            <person name="Mattei B."/>
            <person name="McIntosh T.C."/>
            <person name="McLeod M.P."/>
            <person name="McPherson D."/>
            <person name="Merkulov G."/>
            <person name="Milshina N.V."/>
            <person name="Mobarry C."/>
            <person name="Morris J."/>
            <person name="Moshrefi A."/>
            <person name="Mount S.M."/>
            <person name="Moy M."/>
            <person name="Murphy B."/>
            <person name="Murphy L."/>
            <person name="Muzny D.M."/>
            <person name="Nelson D.L."/>
            <person name="Nelson D.R."/>
            <person name="Nelson K.A."/>
            <person name="Nixon K."/>
            <person name="Nusskern D.R."/>
            <person name="Pacleb J.M."/>
            <person name="Palazzolo M."/>
            <person name="Pittman G.S."/>
            <person name="Pan S."/>
            <person name="Pollard J."/>
            <person name="Puri V."/>
            <person name="Reese M.G."/>
            <person name="Reinert K."/>
            <person name="Remington K."/>
            <person name="Saunders R.D.C."/>
            <person name="Scheeler F."/>
            <person name="Shen H."/>
            <person name="Shue B.C."/>
            <person name="Siden-Kiamos I."/>
            <person name="Simpson M."/>
            <person name="Skupski M.P."/>
            <person name="Smith T.J."/>
            <person name="Spier E."/>
            <person name="Spradling A.C."/>
            <person name="Stapleton M."/>
            <person name="Strong R."/>
            <person name="Sun E."/>
            <person name="Svirskas R."/>
            <person name="Tector C."/>
            <person name="Turner R."/>
            <person name="Venter E."/>
            <person name="Wang A.H."/>
            <person name="Wang X."/>
            <person name="Wang Z.-Y."/>
            <person name="Wassarman D.A."/>
            <person name="Weinstock G.M."/>
            <person name="Weissenbach J."/>
            <person name="Williams S.M."/>
            <person name="Woodage T."/>
            <person name="Worley K.C."/>
            <person name="Wu D."/>
            <person name="Yang S."/>
            <person name="Yao Q.A."/>
            <person name="Ye J."/>
            <person name="Yeh R.-F."/>
            <person name="Zaveri J.S."/>
            <person name="Zhan M."/>
            <person name="Zhang G."/>
            <person name="Zhao Q."/>
            <person name="Zheng L."/>
            <person name="Zheng X.H."/>
            <person name="Zhong F.N."/>
            <person name="Zhong W."/>
            <person name="Zhou X."/>
            <person name="Zhu S.C."/>
            <person name="Zhu X."/>
            <person name="Smith H.O."/>
            <person name="Gibbs R.A."/>
            <person name="Myers E.W."/>
            <person name="Rubin G.M."/>
            <person name="Venter J.C."/>
        </authorList>
    </citation>
    <scope>NUCLEOTIDE SEQUENCE [LARGE SCALE GENOMIC DNA]</scope>
    <source>
        <strain>Berkeley</strain>
    </source>
</reference>
<reference key="4">
    <citation type="journal article" date="2002" name="Genome Biol.">
        <title>Annotation of the Drosophila melanogaster euchromatic genome: a systematic review.</title>
        <authorList>
            <person name="Misra S."/>
            <person name="Crosby M.A."/>
            <person name="Mungall C.J."/>
            <person name="Matthews B.B."/>
            <person name="Campbell K.S."/>
            <person name="Hradecky P."/>
            <person name="Huang Y."/>
            <person name="Kaminker J.S."/>
            <person name="Millburn G.H."/>
            <person name="Prochnik S.E."/>
            <person name="Smith C.D."/>
            <person name="Tupy J.L."/>
            <person name="Whitfield E.J."/>
            <person name="Bayraktaroglu L."/>
            <person name="Berman B.P."/>
            <person name="Bettencourt B.R."/>
            <person name="Celniker S.E."/>
            <person name="de Grey A.D.N.J."/>
            <person name="Drysdale R.A."/>
            <person name="Harris N.L."/>
            <person name="Richter J."/>
            <person name="Russo S."/>
            <person name="Schroeder A.J."/>
            <person name="Shu S.Q."/>
            <person name="Stapleton M."/>
            <person name="Yamada C."/>
            <person name="Ashburner M."/>
            <person name="Gelbart W.M."/>
            <person name="Rubin G.M."/>
            <person name="Lewis S.E."/>
        </authorList>
    </citation>
    <scope>GENOME REANNOTATION</scope>
    <source>
        <strain>Berkeley</strain>
    </source>
</reference>
<reference key="5">
    <citation type="journal article" date="2002" name="Genome Biol.">
        <title>A Drosophila full-length cDNA resource.</title>
        <authorList>
            <person name="Stapleton M."/>
            <person name="Carlson J.W."/>
            <person name="Brokstein P."/>
            <person name="Yu C."/>
            <person name="Champe M."/>
            <person name="George R.A."/>
            <person name="Guarin H."/>
            <person name="Kronmiller B."/>
            <person name="Pacleb J.M."/>
            <person name="Park S."/>
            <person name="Wan K.H."/>
            <person name="Rubin G.M."/>
            <person name="Celniker S.E."/>
        </authorList>
    </citation>
    <scope>NUCLEOTIDE SEQUENCE [LARGE SCALE MRNA]</scope>
    <source>
        <strain>Berkeley</strain>
        <tissue>Embryo</tissue>
    </source>
</reference>
<reference key="6">
    <citation type="journal article" date="1990" name="FEBS Lett.">
        <title>Protein phosphatase 1 activity in Drosophila mutants with abnormalities in mitosis and chromosome condensation.</title>
        <authorList>
            <person name="Dombradi V."/>
            <person name="Axton J.M."/>
            <person name="Barker H.M."/>
            <person name="Cohen P.T.W."/>
        </authorList>
    </citation>
    <scope>FUNCTION</scope>
</reference>
<reference key="7">
    <citation type="journal article" date="2006" name="J. Mol. Biol.">
        <title>Towards a comprehensive analysis of the protein phosphatase 1 interactome in Drosophila.</title>
        <authorList>
            <person name="Bennett D."/>
            <person name="Lyulcheva E."/>
            <person name="Alphey L."/>
        </authorList>
    </citation>
    <scope>INTERACTION WITH NOP17L</scope>
</reference>
<reference key="8">
    <citation type="journal article" date="2008" name="BMC Mol. Biol.">
        <title>Drosophila Uri, a PP1alpha binding protein, is essential for viability, maintenance of DNA integrity and normal transcriptional activity.</title>
        <authorList>
            <person name="Kirchner J."/>
            <person name="Vissi E."/>
            <person name="Gross S."/>
            <person name="Szoor B."/>
            <person name="Rudenko A."/>
            <person name="Alphey L."/>
            <person name="White-Cooper H."/>
        </authorList>
    </citation>
    <scope>CATALYTIC ACTIVITY</scope>
    <scope>INTERACTION WITH URI</scope>
</reference>
<reference key="9">
    <citation type="journal article" date="2015" name="Sci. Rep.">
        <title>Drosophila Rif1 is an essential gene and controls late developmental events by direct interaction with PP1-87B.</title>
        <authorList>
            <person name="Sreesankar E."/>
            <person name="Bharathi V."/>
            <person name="Mishra R.K."/>
            <person name="Mishra K."/>
        </authorList>
    </citation>
    <scope>INTERACTION WITH RIF1</scope>
    <scope>DEVELOPMENTAL STAGE</scope>
</reference>
<reference key="10">
    <citation type="journal article" date="2018" name="PLoS Biol.">
        <title>Rif1 prolongs the embryonic S phase at the Drosophila mid-blastula transition.</title>
        <authorList>
            <person name="Seller C.A."/>
            <person name="O'Farrell P.H."/>
        </authorList>
    </citation>
    <scope>INTERACTION WITH RIF1</scope>
    <scope>DEVELOPMENTAL STAGE</scope>
</reference>
<keyword id="KW-0963">Cytoplasm</keyword>
<keyword id="KW-0378">Hydrolase</keyword>
<keyword id="KW-0464">Manganese</keyword>
<keyword id="KW-0479">Metal-binding</keyword>
<keyword id="KW-0904">Protein phosphatase</keyword>
<keyword id="KW-1185">Reference proteome</keyword>
<protein>
    <recommendedName>
        <fullName>Serine/threonine-protein phosphatase alpha-2 isoform</fullName>
        <ecNumber evidence="4">3.1.3.16</ecNumber>
    </recommendedName>
</protein>
<gene>
    <name type="primary">Pp1-87B</name>
    <name type="ORF">CG5650</name>
</gene>
<name>PP12_DROME</name>
<dbReference type="EC" id="3.1.3.16" evidence="4"/>
<dbReference type="EMBL" id="X15583">
    <property type="protein sequence ID" value="CAA33609.1"/>
    <property type="molecule type" value="mRNA"/>
</dbReference>
<dbReference type="EMBL" id="S47852">
    <property type="protein sequence ID" value="AAB23957.1"/>
    <property type="molecule type" value="Genomic_DNA"/>
</dbReference>
<dbReference type="EMBL" id="AE014297">
    <property type="protein sequence ID" value="AAF54810.1"/>
    <property type="molecule type" value="Genomic_DNA"/>
</dbReference>
<dbReference type="EMBL" id="AY061063">
    <property type="protein sequence ID" value="AAL28611.1"/>
    <property type="molecule type" value="mRNA"/>
</dbReference>
<dbReference type="PIR" id="S12960">
    <property type="entry name" value="PAFF1A"/>
</dbReference>
<dbReference type="RefSeq" id="NP_524937.1">
    <property type="nucleotide sequence ID" value="NM_080198.3"/>
</dbReference>
<dbReference type="SMR" id="P12982"/>
<dbReference type="BioGRID" id="72126">
    <property type="interactions" value="72"/>
</dbReference>
<dbReference type="DIP" id="DIP-18465N"/>
<dbReference type="FunCoup" id="P12982">
    <property type="interactions" value="2014"/>
</dbReference>
<dbReference type="IntAct" id="P12982">
    <property type="interactions" value="54"/>
</dbReference>
<dbReference type="STRING" id="7227.FBpp0082067"/>
<dbReference type="PaxDb" id="7227-FBpp0082067"/>
<dbReference type="EnsemblMetazoa" id="FBtr0082595">
    <property type="protein sequence ID" value="FBpp0082067"/>
    <property type="gene ID" value="FBgn0004103"/>
</dbReference>
<dbReference type="GeneID" id="49260"/>
<dbReference type="KEGG" id="dme:Dmel_CG5650"/>
<dbReference type="AGR" id="FB:FBgn0004103"/>
<dbReference type="CTD" id="49260"/>
<dbReference type="FlyBase" id="FBgn0004103">
    <property type="gene designation" value="Pp1-87B"/>
</dbReference>
<dbReference type="VEuPathDB" id="VectorBase:FBgn0004103"/>
<dbReference type="eggNOG" id="KOG0374">
    <property type="taxonomic scope" value="Eukaryota"/>
</dbReference>
<dbReference type="GeneTree" id="ENSGT00940000153472"/>
<dbReference type="HOGENOM" id="CLU_004962_0_0_1"/>
<dbReference type="InParanoid" id="P12982"/>
<dbReference type="OMA" id="YLVMESR"/>
<dbReference type="OrthoDB" id="1930084at2759"/>
<dbReference type="PhylomeDB" id="P12982"/>
<dbReference type="Reactome" id="R-DME-350416">
    <property type="pathway name" value="Regulation of non-muscle Myosin II"/>
</dbReference>
<dbReference type="Reactome" id="R-DME-350480">
    <property type="pathway name" value="Activation of non-muscle Myosin II"/>
</dbReference>
<dbReference type="Reactome" id="R-DME-538898">
    <property type="pathway name" value="Dephosphorylation of TIM"/>
</dbReference>
<dbReference type="BioGRID-ORCS" id="49260">
    <property type="hits" value="1 hit in 3 CRISPR screens"/>
</dbReference>
<dbReference type="ChiTaRS" id="Pp1-87B">
    <property type="organism name" value="fly"/>
</dbReference>
<dbReference type="GenomeRNAi" id="49260"/>
<dbReference type="PRO" id="PR:P12982"/>
<dbReference type="Proteomes" id="UP000000803">
    <property type="component" value="Chromosome 3R"/>
</dbReference>
<dbReference type="Bgee" id="FBgn0004103">
    <property type="expression patterns" value="Expressed in distal medullary amacrine neuron Dm11 in insect head and 258 other cell types or tissues"/>
</dbReference>
<dbReference type="GO" id="GO:0005737">
    <property type="term" value="C:cytoplasm"/>
    <property type="evidence" value="ECO:0000318"/>
    <property type="project" value="GO_Central"/>
</dbReference>
<dbReference type="GO" id="GO:0005829">
    <property type="term" value="C:cytosol"/>
    <property type="evidence" value="ECO:0000304"/>
    <property type="project" value="Reactome"/>
</dbReference>
<dbReference type="GO" id="GO:0005634">
    <property type="term" value="C:nucleus"/>
    <property type="evidence" value="ECO:0000318"/>
    <property type="project" value="GO_Central"/>
</dbReference>
<dbReference type="GO" id="GO:0005700">
    <property type="term" value="C:polytene chromosome"/>
    <property type="evidence" value="ECO:0000314"/>
    <property type="project" value="FlyBase"/>
</dbReference>
<dbReference type="GO" id="GO:0000164">
    <property type="term" value="C:protein phosphatase type 1 complex"/>
    <property type="evidence" value="ECO:0000314"/>
    <property type="project" value="FlyBase"/>
</dbReference>
<dbReference type="GO" id="GO:0046872">
    <property type="term" value="F:metal ion binding"/>
    <property type="evidence" value="ECO:0007669"/>
    <property type="project" value="UniProtKB-KW"/>
</dbReference>
<dbReference type="GO" id="GO:0017018">
    <property type="term" value="F:myosin phosphatase activity"/>
    <property type="evidence" value="ECO:0000314"/>
    <property type="project" value="FlyBase"/>
</dbReference>
<dbReference type="GO" id="GO:0004722">
    <property type="term" value="F:protein serine/threonine phosphatase activity"/>
    <property type="evidence" value="ECO:0000314"/>
    <property type="project" value="FlyBase"/>
</dbReference>
<dbReference type="GO" id="GO:0008344">
    <property type="term" value="P:adult locomotory behavior"/>
    <property type="evidence" value="ECO:0000315"/>
    <property type="project" value="FlyBase"/>
</dbReference>
<dbReference type="GO" id="GO:0007411">
    <property type="term" value="P:axon guidance"/>
    <property type="evidence" value="ECO:0000315"/>
    <property type="project" value="FlyBase"/>
</dbReference>
<dbReference type="GO" id="GO:0030261">
    <property type="term" value="P:chromosome condensation"/>
    <property type="evidence" value="ECO:0000315"/>
    <property type="project" value="FlyBase"/>
</dbReference>
<dbReference type="GO" id="GO:0007059">
    <property type="term" value="P:chromosome segregation"/>
    <property type="evidence" value="ECO:0000315"/>
    <property type="project" value="FlyBase"/>
</dbReference>
<dbReference type="GO" id="GO:0007611">
    <property type="term" value="P:learning or memory"/>
    <property type="evidence" value="ECO:0000303"/>
    <property type="project" value="FlyBase"/>
</dbReference>
<dbReference type="GO" id="GO:0040011">
    <property type="term" value="P:locomotion"/>
    <property type="evidence" value="ECO:0000303"/>
    <property type="project" value="FlyBase"/>
</dbReference>
<dbReference type="GO" id="GO:0000278">
    <property type="term" value="P:mitotic cell cycle"/>
    <property type="evidence" value="ECO:0000315"/>
    <property type="project" value="FlyBase"/>
</dbReference>
<dbReference type="GO" id="GO:0007080">
    <property type="term" value="P:mitotic metaphase chromosome alignment"/>
    <property type="evidence" value="ECO:0000315"/>
    <property type="project" value="FlyBase"/>
</dbReference>
<dbReference type="GO" id="GO:0030514">
    <property type="term" value="P:negative regulation of BMP signaling pathway"/>
    <property type="evidence" value="ECO:0000316"/>
    <property type="project" value="FlyBase"/>
</dbReference>
<dbReference type="GO" id="GO:0007399">
    <property type="term" value="P:nervous system development"/>
    <property type="evidence" value="ECO:0000315"/>
    <property type="project" value="FlyBase"/>
</dbReference>
<dbReference type="GO" id="GO:0008355">
    <property type="term" value="P:olfactory learning"/>
    <property type="evidence" value="ECO:0000315"/>
    <property type="project" value="FlyBase"/>
</dbReference>
<dbReference type="GO" id="GO:0048477">
    <property type="term" value="P:oogenesis"/>
    <property type="evidence" value="ECO:0000315"/>
    <property type="project" value="FlyBase"/>
</dbReference>
<dbReference type="GO" id="GO:0090263">
    <property type="term" value="P:positive regulation of canonical Wnt signaling pathway"/>
    <property type="evidence" value="ECO:0000316"/>
    <property type="project" value="FlyBase"/>
</dbReference>
<dbReference type="GO" id="GO:0046628">
    <property type="term" value="P:positive regulation of insulin receptor signaling pathway"/>
    <property type="evidence" value="ECO:0000315"/>
    <property type="project" value="FlyBase"/>
</dbReference>
<dbReference type="GO" id="GO:0046579">
    <property type="term" value="P:positive regulation of Ras protein signal transduction"/>
    <property type="evidence" value="ECO:0007003"/>
    <property type="project" value="FlyBase"/>
</dbReference>
<dbReference type="GO" id="GO:0005979">
    <property type="term" value="P:regulation of glycogen biosynthetic process"/>
    <property type="evidence" value="ECO:0000250"/>
    <property type="project" value="FlyBase"/>
</dbReference>
<dbReference type="GO" id="GO:0005981">
    <property type="term" value="P:regulation of glycogen catabolic process"/>
    <property type="evidence" value="ECO:0000250"/>
    <property type="project" value="FlyBase"/>
</dbReference>
<dbReference type="GO" id="GO:0051225">
    <property type="term" value="P:spindle assembly"/>
    <property type="evidence" value="ECO:0000315"/>
    <property type="project" value="FlyBase"/>
</dbReference>
<dbReference type="GO" id="GO:0008542">
    <property type="term" value="P:visual learning"/>
    <property type="evidence" value="ECO:0000315"/>
    <property type="project" value="FlyBase"/>
</dbReference>
<dbReference type="CDD" id="cd07414">
    <property type="entry name" value="MPP_PP1_PPKL"/>
    <property type="match status" value="1"/>
</dbReference>
<dbReference type="FunFam" id="3.60.21.10:FF:000004">
    <property type="entry name" value="Serine/threonine-protein phosphatase"/>
    <property type="match status" value="1"/>
</dbReference>
<dbReference type="Gene3D" id="3.60.21.10">
    <property type="match status" value="1"/>
</dbReference>
<dbReference type="InterPro" id="IPR004843">
    <property type="entry name" value="Calcineurin-like_PHP_ApaH"/>
</dbReference>
<dbReference type="InterPro" id="IPR029052">
    <property type="entry name" value="Metallo-depent_PP-like"/>
</dbReference>
<dbReference type="InterPro" id="IPR050341">
    <property type="entry name" value="PP1_catalytic_subunit"/>
</dbReference>
<dbReference type="InterPro" id="IPR006186">
    <property type="entry name" value="Ser/Thr-sp_prot-phosphatase"/>
</dbReference>
<dbReference type="InterPro" id="IPR031675">
    <property type="entry name" value="STPPase_N"/>
</dbReference>
<dbReference type="PANTHER" id="PTHR11668">
    <property type="entry name" value="SERINE/THREONINE PROTEIN PHOSPHATASE"/>
    <property type="match status" value="1"/>
</dbReference>
<dbReference type="PANTHER" id="PTHR11668:SF300">
    <property type="entry name" value="SERINE_THREONINE-PROTEIN PHOSPHATASE"/>
    <property type="match status" value="1"/>
</dbReference>
<dbReference type="Pfam" id="PF00149">
    <property type="entry name" value="Metallophos"/>
    <property type="match status" value="1"/>
</dbReference>
<dbReference type="Pfam" id="PF16891">
    <property type="entry name" value="STPPase_N"/>
    <property type="match status" value="1"/>
</dbReference>
<dbReference type="PRINTS" id="PR00114">
    <property type="entry name" value="STPHPHTASE"/>
</dbReference>
<dbReference type="SMART" id="SM00156">
    <property type="entry name" value="PP2Ac"/>
    <property type="match status" value="1"/>
</dbReference>
<dbReference type="SUPFAM" id="SSF56300">
    <property type="entry name" value="Metallo-dependent phosphatases"/>
    <property type="match status" value="1"/>
</dbReference>
<dbReference type="PROSITE" id="PS00125">
    <property type="entry name" value="SER_THR_PHOSPHATASE"/>
    <property type="match status" value="1"/>
</dbReference>
<comment type="function">
    <text evidence="2 5">Is essential for the regulation of mitotic chromosomal segregation as well as regulation of chromatin condensation during interphase.</text>
</comment>
<comment type="catalytic activity">
    <reaction evidence="4">
        <text>O-phospho-L-seryl-[protein] + H2O = L-seryl-[protein] + phosphate</text>
        <dbReference type="Rhea" id="RHEA:20629"/>
        <dbReference type="Rhea" id="RHEA-COMP:9863"/>
        <dbReference type="Rhea" id="RHEA-COMP:11604"/>
        <dbReference type="ChEBI" id="CHEBI:15377"/>
        <dbReference type="ChEBI" id="CHEBI:29999"/>
        <dbReference type="ChEBI" id="CHEBI:43474"/>
        <dbReference type="ChEBI" id="CHEBI:83421"/>
        <dbReference type="EC" id="3.1.3.16"/>
    </reaction>
</comment>
<comment type="catalytic activity">
    <reaction evidence="4">
        <text>O-phospho-L-threonyl-[protein] + H2O = L-threonyl-[protein] + phosphate</text>
        <dbReference type="Rhea" id="RHEA:47004"/>
        <dbReference type="Rhea" id="RHEA-COMP:11060"/>
        <dbReference type="Rhea" id="RHEA-COMP:11605"/>
        <dbReference type="ChEBI" id="CHEBI:15377"/>
        <dbReference type="ChEBI" id="CHEBI:30013"/>
        <dbReference type="ChEBI" id="CHEBI:43474"/>
        <dbReference type="ChEBI" id="CHEBI:61977"/>
        <dbReference type="EC" id="3.1.3.16"/>
    </reaction>
</comment>
<comment type="cofactor">
    <cofactor evidence="1">
        <name>Mn(2+)</name>
        <dbReference type="ChEBI" id="CHEBI:29035"/>
    </cofactor>
    <text evidence="1">Binds 2 manganese ions per subunit.</text>
</comment>
<comment type="subunit">
    <text evidence="3 4 6 7">Interacts with Nop17l (PubMed:17007873). Interacts with uri; uri inhibits Pp1-87B phosphatase activity (PubMed:18412953). Interacts with Rif1 (PubMed:26022086, PubMed:29746464).</text>
</comment>
<comment type="interaction">
    <interactant intactId="EBI-152633">
        <id>P12982</id>
    </interactant>
    <interactant intactId="EBI-91203">
        <id>Q9VK43</id>
        <label>A16</label>
    </interactant>
    <organismsDiffer>false</organismsDiffer>
    <experiments>3</experiments>
</comment>
<comment type="interaction">
    <interactant intactId="EBI-152633">
        <id>P12982</id>
    </interactant>
    <interactant intactId="EBI-95729">
        <id>Q9V3C7</id>
        <label>I-2</label>
    </interactant>
    <organismsDiffer>false</organismsDiffer>
    <experiments>3</experiments>
</comment>
<comment type="interaction">
    <interactant intactId="EBI-152633">
        <id>P12982</id>
    </interactant>
    <interactant intactId="EBI-150380">
        <id>Q0E9G3</id>
        <label>Nop17l</label>
    </interactant>
    <organismsDiffer>false</organismsDiffer>
    <experiments>3</experiments>
</comment>
<comment type="subcellular location">
    <subcellularLocation>
        <location>Cytoplasm</location>
    </subcellularLocation>
</comment>
<comment type="developmental stage">
    <text evidence="6 7">Detected in embryos and larvae (at protein level).</text>
</comment>
<comment type="similarity">
    <text evidence="8">Belongs to the PPP phosphatase family. PP-1 subfamily.</text>
</comment>
<accession>P12982</accession>
<accession>Q4PIY5</accession>
<accession>Q9VG75</accession>
<feature type="chain" id="PRO_0000058792" description="Serine/threonine-protein phosphatase alpha-2 isoform">
    <location>
        <begin position="1"/>
        <end position="302"/>
    </location>
</feature>
<feature type="active site" description="Proton donor" evidence="1">
    <location>
        <position position="123"/>
    </location>
</feature>
<feature type="binding site" evidence="1">
    <location>
        <position position="62"/>
    </location>
    <ligand>
        <name>Mn(2+)</name>
        <dbReference type="ChEBI" id="CHEBI:29035"/>
        <label>1</label>
    </ligand>
</feature>
<feature type="binding site" evidence="1">
    <location>
        <position position="64"/>
    </location>
    <ligand>
        <name>Mn(2+)</name>
        <dbReference type="ChEBI" id="CHEBI:29035"/>
        <label>1</label>
    </ligand>
</feature>
<feature type="binding site" evidence="1">
    <location>
        <position position="90"/>
    </location>
    <ligand>
        <name>Mn(2+)</name>
        <dbReference type="ChEBI" id="CHEBI:29035"/>
        <label>1</label>
    </ligand>
</feature>
<feature type="binding site" evidence="1">
    <location>
        <position position="90"/>
    </location>
    <ligand>
        <name>Mn(2+)</name>
        <dbReference type="ChEBI" id="CHEBI:29035"/>
        <label>2</label>
    </ligand>
</feature>
<feature type="binding site" evidence="1">
    <location>
        <position position="122"/>
    </location>
    <ligand>
        <name>Mn(2+)</name>
        <dbReference type="ChEBI" id="CHEBI:29035"/>
        <label>2</label>
    </ligand>
</feature>
<feature type="binding site" evidence="1">
    <location>
        <position position="171"/>
    </location>
    <ligand>
        <name>Mn(2+)</name>
        <dbReference type="ChEBI" id="CHEBI:29035"/>
        <label>2</label>
    </ligand>
</feature>
<feature type="binding site" evidence="1">
    <location>
        <position position="246"/>
    </location>
    <ligand>
        <name>Mn(2+)</name>
        <dbReference type="ChEBI" id="CHEBI:29035"/>
        <label>2</label>
    </ligand>
</feature>
<organism>
    <name type="scientific">Drosophila melanogaster</name>
    <name type="common">Fruit fly</name>
    <dbReference type="NCBI Taxonomy" id="7227"/>
    <lineage>
        <taxon>Eukaryota</taxon>
        <taxon>Metazoa</taxon>
        <taxon>Ecdysozoa</taxon>
        <taxon>Arthropoda</taxon>
        <taxon>Hexapoda</taxon>
        <taxon>Insecta</taxon>
        <taxon>Pterygota</taxon>
        <taxon>Neoptera</taxon>
        <taxon>Endopterygota</taxon>
        <taxon>Diptera</taxon>
        <taxon>Brachycera</taxon>
        <taxon>Muscomorpha</taxon>
        <taxon>Ephydroidea</taxon>
        <taxon>Drosophilidae</taxon>
        <taxon>Drosophila</taxon>
        <taxon>Sophophora</taxon>
    </lineage>
</organism>
<proteinExistence type="evidence at protein level"/>
<sequence>MGDVMNIDSIISRLLEVRGARPGKNVQLSEGEIRGLCLKSREIFLSQPILLELEAPLKICGDIHGQYYDLLRLFEYGGFPPESNYLFLGDYVDRGKQSLETICLLLAYKIKYSENFFLLRGNHECASINRIYGFYDECKRRYSIKLWKTFTDCFNCLPVAAIVDEKIFCCHGGLSPDLTSMEQIRRIMRPTDVPDQGLLCDLLWSDPDKDTMGWGENDRGVSFTFGAEVVAKFLQKHEFDLICRAHQVVEDGYEFFAKRMLVTLFSAPNYCGEFDNAGAMMSVDDTLMCSFQILKPADKRKK</sequence>